<keyword id="KW-0025">Alternative splicing</keyword>
<keyword id="KW-0067">ATP-binding</keyword>
<keyword id="KW-0963">Cytoplasm</keyword>
<keyword id="KW-0227">DNA damage</keyword>
<keyword id="KW-0233">DNA recombination</keyword>
<keyword id="KW-0238">DNA-binding</keyword>
<keyword id="KW-0547">Nucleotide-binding</keyword>
<keyword id="KW-1185">Reference proteome</keyword>
<reference key="1">
    <citation type="submission" date="2000-05" db="EMBL/GenBank/DDBJ databases">
        <title>Structural analysis of Arabidopsis thaliana chromosome 3. III.</title>
        <authorList>
            <person name="Nakamura Y."/>
        </authorList>
    </citation>
    <scope>NUCLEOTIDE SEQUENCE [LARGE SCALE GENOMIC DNA]</scope>
    <source>
        <strain>cv. Columbia</strain>
    </source>
</reference>
<reference key="2">
    <citation type="journal article" date="2017" name="Plant J.">
        <title>Araport11: a complete reannotation of the Arabidopsis thaliana reference genome.</title>
        <authorList>
            <person name="Cheng C.Y."/>
            <person name="Krishnakumar V."/>
            <person name="Chan A.P."/>
            <person name="Thibaud-Nissen F."/>
            <person name="Schobel S."/>
            <person name="Town C.D."/>
        </authorList>
    </citation>
    <scope>GENOME REANNOTATION</scope>
    <source>
        <strain>cv. Columbia</strain>
    </source>
</reference>
<proteinExistence type="inferred from homology"/>
<organism>
    <name type="scientific">Arabidopsis thaliana</name>
    <name type="common">Mouse-ear cress</name>
    <dbReference type="NCBI Taxonomy" id="3702"/>
    <lineage>
        <taxon>Eukaryota</taxon>
        <taxon>Viridiplantae</taxon>
        <taxon>Streptophyta</taxon>
        <taxon>Embryophyta</taxon>
        <taxon>Tracheophyta</taxon>
        <taxon>Spermatophyta</taxon>
        <taxon>Magnoliopsida</taxon>
        <taxon>eudicotyledons</taxon>
        <taxon>Gunneridae</taxon>
        <taxon>Pentapetalae</taxon>
        <taxon>rosids</taxon>
        <taxon>malvids</taxon>
        <taxon>Brassicales</taxon>
        <taxon>Brassicaceae</taxon>
        <taxon>Camelineae</taxon>
        <taxon>Arabidopsis</taxon>
    </lineage>
</organism>
<comment type="function">
    <text evidence="1">Involved in recombination ability and DNA strand transfer activity.</text>
</comment>
<comment type="subcellular location">
    <subcellularLocation>
        <location evidence="1">Cytoplasm</location>
    </subcellularLocation>
</comment>
<comment type="alternative products">
    <event type="alternative splicing"/>
    <isoform>
        <id>Q3EAS6-1</id>
        <name>1</name>
        <sequence type="displayed"/>
    </isoform>
    <text>A number of isoforms are produced. According to EST sequences.</text>
</comment>
<comment type="similarity">
    <text evidence="3">Belongs to the RecA family.</text>
</comment>
<dbReference type="EMBL" id="AP002067">
    <property type="status" value="NOT_ANNOTATED_CDS"/>
    <property type="molecule type" value="Genomic_DNA"/>
</dbReference>
<dbReference type="EMBL" id="CP002686">
    <property type="protein sequence ID" value="AEE77702.1"/>
    <property type="molecule type" value="Genomic_DNA"/>
</dbReference>
<dbReference type="RefSeq" id="NP_189781.4">
    <molecule id="Q3EAS6-1"/>
    <property type="nucleotide sequence ID" value="NM_114061.4"/>
</dbReference>
<dbReference type="SMR" id="Q3EAS6"/>
<dbReference type="FunCoup" id="Q3EAS6">
    <property type="interactions" value="6"/>
</dbReference>
<dbReference type="STRING" id="3702.Q3EAS6"/>
<dbReference type="PaxDb" id="3702-AT3G32920.1"/>
<dbReference type="EnsemblPlants" id="AT3G32920.1">
    <molecule id="Q3EAS6-1"/>
    <property type="protein sequence ID" value="AT3G32920.1"/>
    <property type="gene ID" value="AT3G32920"/>
</dbReference>
<dbReference type="GeneID" id="823055"/>
<dbReference type="Gramene" id="AT3G32920.1">
    <molecule id="Q3EAS6-1"/>
    <property type="protein sequence ID" value="AT3G32920.1"/>
    <property type="gene ID" value="AT3G32920"/>
</dbReference>
<dbReference type="KEGG" id="ath:AT3G32920"/>
<dbReference type="Araport" id="AT3G32920"/>
<dbReference type="TAIR" id="AT3G32920"/>
<dbReference type="eggNOG" id="KOG1433">
    <property type="taxonomic scope" value="Eukaryota"/>
</dbReference>
<dbReference type="HOGENOM" id="CLU_040469_7_0_1"/>
<dbReference type="InParanoid" id="Q3EAS6"/>
<dbReference type="OMA" id="TCAWIDA"/>
<dbReference type="PRO" id="PR:Q3EAS6"/>
<dbReference type="Proteomes" id="UP000006548">
    <property type="component" value="Chromosome 3"/>
</dbReference>
<dbReference type="ExpressionAtlas" id="Q3EAS6">
    <property type="expression patterns" value="baseline and differential"/>
</dbReference>
<dbReference type="GO" id="GO:0005737">
    <property type="term" value="C:cytoplasm"/>
    <property type="evidence" value="ECO:0007669"/>
    <property type="project" value="UniProtKB-SubCell"/>
</dbReference>
<dbReference type="GO" id="GO:0005524">
    <property type="term" value="F:ATP binding"/>
    <property type="evidence" value="ECO:0007669"/>
    <property type="project" value="UniProtKB-KW"/>
</dbReference>
<dbReference type="GO" id="GO:0016887">
    <property type="term" value="F:ATP hydrolysis activity"/>
    <property type="evidence" value="ECO:0007669"/>
    <property type="project" value="InterPro"/>
</dbReference>
<dbReference type="GO" id="GO:0140664">
    <property type="term" value="F:ATP-dependent DNA damage sensor activity"/>
    <property type="evidence" value="ECO:0007669"/>
    <property type="project" value="InterPro"/>
</dbReference>
<dbReference type="GO" id="GO:0003697">
    <property type="term" value="F:single-stranded DNA binding"/>
    <property type="evidence" value="ECO:0007669"/>
    <property type="project" value="InterPro"/>
</dbReference>
<dbReference type="GO" id="GO:0006310">
    <property type="term" value="P:DNA recombination"/>
    <property type="evidence" value="ECO:0007669"/>
    <property type="project" value="UniProtKB-KW"/>
</dbReference>
<dbReference type="GO" id="GO:0006281">
    <property type="term" value="P:DNA repair"/>
    <property type="evidence" value="ECO:0007669"/>
    <property type="project" value="InterPro"/>
</dbReference>
<dbReference type="Gene3D" id="3.40.50.300">
    <property type="entry name" value="P-loop containing nucleotide triphosphate hydrolases"/>
    <property type="match status" value="1"/>
</dbReference>
<dbReference type="InterPro" id="IPR003593">
    <property type="entry name" value="AAA+_ATPase"/>
</dbReference>
<dbReference type="InterPro" id="IPR013765">
    <property type="entry name" value="DNA_recomb/repair_RecA"/>
</dbReference>
<dbReference type="InterPro" id="IPR027417">
    <property type="entry name" value="P-loop_NTPase"/>
</dbReference>
<dbReference type="InterPro" id="IPR049428">
    <property type="entry name" value="RecA-like_N"/>
</dbReference>
<dbReference type="InterPro" id="IPR020588">
    <property type="entry name" value="RecA_ATP-bd"/>
</dbReference>
<dbReference type="InterPro" id="IPR020587">
    <property type="entry name" value="RecA_monomer-monomer_interface"/>
</dbReference>
<dbReference type="PANTHER" id="PTHR45900:SF6">
    <property type="entry name" value="DNA REPAIR PROTEIN RECA HOMOLOG 3, MITOCHONDRIAL-RELATED"/>
    <property type="match status" value="1"/>
</dbReference>
<dbReference type="PANTHER" id="PTHR45900">
    <property type="entry name" value="RECA"/>
    <property type="match status" value="1"/>
</dbReference>
<dbReference type="Pfam" id="PF00154">
    <property type="entry name" value="RecA"/>
    <property type="match status" value="2"/>
</dbReference>
<dbReference type="PRINTS" id="PR00142">
    <property type="entry name" value="RECA"/>
</dbReference>
<dbReference type="SMART" id="SM00382">
    <property type="entry name" value="AAA"/>
    <property type="match status" value="1"/>
</dbReference>
<dbReference type="SUPFAM" id="SSF52540">
    <property type="entry name" value="P-loop containing nucleoside triphosphate hydrolases"/>
    <property type="match status" value="1"/>
</dbReference>
<dbReference type="PROSITE" id="PS50162">
    <property type="entry name" value="RECA_2"/>
    <property type="match status" value="1"/>
</dbReference>
<dbReference type="PROSITE" id="PS50163">
    <property type="entry name" value="RECA_3"/>
    <property type="match status" value="1"/>
</dbReference>
<feature type="chain" id="PRO_0000122914" description="Putative DNA repair protein recA homolog 4">
    <location>
        <begin position="1"/>
        <end position="226"/>
    </location>
</feature>
<feature type="binding site" evidence="2">
    <location>
        <begin position="41"/>
        <end position="48"/>
    </location>
    <ligand>
        <name>ATP</name>
        <dbReference type="ChEBI" id="CHEBI:30616"/>
    </ligand>
</feature>
<accession>Q3EAS6</accession>
<accession>F4JBG3</accession>
<gene>
    <name type="ordered locus">At3g32920</name>
    <name type="ORF">T7B9.20</name>
</gene>
<evidence type="ECO:0000250" key="1"/>
<evidence type="ECO:0000255" key="2"/>
<evidence type="ECO:0000305" key="3"/>
<name>RECA4_ARATH</name>
<protein>
    <recommendedName>
        <fullName>Putative DNA repair protein recA homolog 4</fullName>
    </recommendedName>
    <alternativeName>
        <fullName>Recombinase A homolog 4</fullName>
    </alternativeName>
</protein>
<sequence>MYLSRAVSPRNVPVFSTGSFALDVALGVGGLPKGRLVEIYGPEASGKTALALHMLSMLLIRSLAKAIGVNTENLLLSQPDCGKQALSLVDTLIQSGSVDVIVVDSVAALVPKGELDGEMGDAHMAIQARLMSQALRKFSHSLLLSQTLLIFINQVRERFGGPTEVTSGGNALKFYAPMRLDIKRIGLIKKGEEFFRMTKCLCLNACAHNGKSSLREDSEEQARSAI</sequence>